<comment type="function">
    <text evidence="2 3">3-keto-disaccharide hydrolase that preferentially hydrolyzes 3-keto-trehalose (3-dehydro-alpha,alpha-trehalose) (PubMed:33657378). Important for disaccharide utilization in the human gut (PubMed:33657378). Also shows hydrolysis activity with the glucosinolates glucoraphanin or glucobrassicin, but with much lower efficiency (PubMed:32084341).</text>
</comment>
<comment type="catalytic activity">
    <reaction evidence="3">
        <text>3-dehydro-alpha,alpha-trehalose + H2O = 3-dehydro-D-glucose + D-glucose</text>
        <dbReference type="Rhea" id="RHEA:78719"/>
        <dbReference type="ChEBI" id="CHEBI:4167"/>
        <dbReference type="ChEBI" id="CHEBI:15377"/>
        <dbReference type="ChEBI" id="CHEBI:55402"/>
        <dbReference type="ChEBI" id="CHEBI:55511"/>
        <dbReference type="EC" id="3.2.1.218"/>
    </reaction>
</comment>
<comment type="subcellular location">
    <subcellularLocation>
        <location evidence="1">Cell membrane</location>
        <topology evidence="1">Lipid-anchor</topology>
    </subcellularLocation>
</comment>
<comment type="induction">
    <text evidence="3">Induced during growth on trehalose.</text>
</comment>
<comment type="disruption phenotype">
    <text evidence="2">Deletion mutant lacks the ability to convert glucosinolates to isothiocyanates (PubMed:32084341). Monocolonization of mice with the mutant shows reduced isothiocyanate production in the gastrointestinal tract (PubMed:32084341).</text>
</comment>
<dbReference type="EC" id="3.2.1.218" evidence="3"/>
<dbReference type="EMBL" id="AE015928">
    <property type="protein sequence ID" value="AAO77264.1"/>
    <property type="molecule type" value="Genomic_DNA"/>
</dbReference>
<dbReference type="RefSeq" id="NP_811070.1">
    <property type="nucleotide sequence ID" value="NC_004663.1"/>
</dbReference>
<dbReference type="RefSeq" id="WP_008763946.1">
    <property type="nucleotide sequence ID" value="NC_004663.1"/>
</dbReference>
<dbReference type="PDB" id="3OSD">
    <property type="method" value="X-ray"/>
    <property type="resolution" value="1.80 A"/>
    <property type="chains" value="A=27-290"/>
</dbReference>
<dbReference type="PDB" id="8RR2">
    <property type="method" value="X-ray"/>
    <property type="resolution" value="1.74 A"/>
    <property type="chains" value="A/B=27-290"/>
</dbReference>
<dbReference type="PDB" id="8TDA">
    <property type="method" value="X-ray"/>
    <property type="resolution" value="1.46 A"/>
    <property type="chains" value="A/B=27-290"/>
</dbReference>
<dbReference type="PDB" id="8TDE">
    <property type="method" value="X-ray"/>
    <property type="resolution" value="1.85 A"/>
    <property type="chains" value="A/B=27-290"/>
</dbReference>
<dbReference type="PDBsum" id="3OSD"/>
<dbReference type="PDBsum" id="8RR2"/>
<dbReference type="PDBsum" id="8TDA"/>
<dbReference type="PDBsum" id="8TDE"/>
<dbReference type="SMR" id="Q8A5T1"/>
<dbReference type="STRING" id="226186.BT_2157"/>
<dbReference type="PaxDb" id="226186-BT_2157"/>
<dbReference type="DNASU" id="1074364"/>
<dbReference type="EnsemblBacteria" id="AAO77264">
    <property type="protein sequence ID" value="AAO77264"/>
    <property type="gene ID" value="BT_2157"/>
</dbReference>
<dbReference type="GeneID" id="60923327"/>
<dbReference type="KEGG" id="bth:BT_2157"/>
<dbReference type="PATRIC" id="fig|226186.12.peg.2221"/>
<dbReference type="eggNOG" id="COG2152">
    <property type="taxonomic scope" value="Bacteria"/>
</dbReference>
<dbReference type="HOGENOM" id="CLU_073042_0_0_10"/>
<dbReference type="InParanoid" id="Q8A5T1"/>
<dbReference type="OrthoDB" id="9806233at2"/>
<dbReference type="BioCyc" id="MetaCyc:MONOMER-21862"/>
<dbReference type="EvolutionaryTrace" id="Q8A5T1"/>
<dbReference type="Proteomes" id="UP000001414">
    <property type="component" value="Chromosome"/>
</dbReference>
<dbReference type="GO" id="GO:0005886">
    <property type="term" value="C:plasma membrane"/>
    <property type="evidence" value="ECO:0007669"/>
    <property type="project" value="UniProtKB-SubCell"/>
</dbReference>
<dbReference type="GO" id="GO:0016798">
    <property type="term" value="F:hydrolase activity, acting on glycosyl bonds"/>
    <property type="evidence" value="ECO:0007669"/>
    <property type="project" value="UniProtKB-KW"/>
</dbReference>
<dbReference type="Gene3D" id="2.60.120.560">
    <property type="entry name" value="Exo-inulinase, domain 1"/>
    <property type="match status" value="1"/>
</dbReference>
<dbReference type="InterPro" id="IPR010496">
    <property type="entry name" value="3-keto-disaccharide_hydrolase"/>
</dbReference>
<dbReference type="Pfam" id="PF06439">
    <property type="entry name" value="3keto-disac_hyd"/>
    <property type="match status" value="1"/>
</dbReference>
<dbReference type="PROSITE" id="PS51257">
    <property type="entry name" value="PROKAR_LIPOPROTEIN"/>
    <property type="match status" value="1"/>
</dbReference>
<reference key="1">
    <citation type="journal article" date="2003" name="Science">
        <title>A genomic view of the human-Bacteroides thetaiotaomicron symbiosis.</title>
        <authorList>
            <person name="Xu J."/>
            <person name="Bjursell M.K."/>
            <person name="Himrod J."/>
            <person name="Deng S."/>
            <person name="Carmichael L.K."/>
            <person name="Chiang H.C."/>
            <person name="Hooper L.V."/>
            <person name="Gordon J.I."/>
        </authorList>
    </citation>
    <scope>NUCLEOTIDE SEQUENCE [LARGE SCALE GENOMIC DNA]</scope>
    <source>
        <strain>ATCC 29148 / DSM 2079 / JCM 5827 / CCUG 10774 / NCTC 10582 / VPI-5482 / E50</strain>
    </source>
</reference>
<reference key="2">
    <citation type="journal article" date="2009" name="Proc. Natl. Acad. Sci. U.S.A.">
        <title>Characterizing a model human gut microbiota composed of members of its two dominant bacterial phyla.</title>
        <authorList>
            <person name="Mahowald M.A."/>
            <person name="Rey F.E."/>
            <person name="Seedorf H."/>
            <person name="Turnbaugh P.J."/>
            <person name="Fulton R.S."/>
            <person name="Wollam A."/>
            <person name="Shah N."/>
            <person name="Wang C."/>
            <person name="Magrini V."/>
            <person name="Wilson R.K."/>
            <person name="Cantarel B.L."/>
            <person name="Coutinho P.M."/>
            <person name="Henrissat B."/>
            <person name="Crock L.W."/>
            <person name="Russell A."/>
            <person name="Verberkmoes N.C."/>
            <person name="Hettich R.L."/>
            <person name="Gordon J.I."/>
        </authorList>
    </citation>
    <scope>NUCLEOTIDE SEQUENCE [LARGE SCALE GENOMIC DNA]</scope>
    <source>
        <strain>ATCC 29148 / DSM 2079 / JCM 5827 / CCUG 10774 / NCTC 10582 / VPI-5482 / E50</strain>
    </source>
</reference>
<reference key="3">
    <citation type="journal article" date="2020" name="Cell">
        <title>A Metabolic Pathway for Activation of Dietary Glucosinolates by a Human Gut Symbiont.</title>
        <authorList>
            <person name="Liou C.S."/>
            <person name="Sirk S.J."/>
            <person name="Diaz C.A.C."/>
            <person name="Klein A.P."/>
            <person name="Fischer C.R."/>
            <person name="Higginbottom S.K."/>
            <person name="Erez A."/>
            <person name="Donia M.S."/>
            <person name="Sonnenburg J.L."/>
            <person name="Sattely E.S."/>
        </authorList>
    </citation>
    <scope>FUNCTION</scope>
    <scope>DISRUPTION PHENOTYPE</scope>
</reference>
<reference key="4">
    <citation type="journal article" date="2021" name="Cell Rep.">
        <title>Functional genetics of human gut commensal Bacteroides thetaiotaomicron reveals metabolic requirements for growth across environments.</title>
        <authorList>
            <person name="Liu H."/>
            <person name="Shiver A.L."/>
            <person name="Price M.N."/>
            <person name="Carlson H.K."/>
            <person name="Trotter V.V."/>
            <person name="Chen Y."/>
            <person name="Escalante V."/>
            <person name="Ray J."/>
            <person name="Hern K.E."/>
            <person name="Petzold C.J."/>
            <person name="Turnbaugh P.J."/>
            <person name="Huang K.C."/>
            <person name="Arkin A.P."/>
            <person name="Deutschbauer A.M."/>
        </authorList>
    </citation>
    <scope>FUNCTION</scope>
    <scope>CATALYTIC ACTIVITY</scope>
    <scope>INDUCTION</scope>
    <source>
        <strain>ATCC 29148 / DSM 2079 / JCM 5827 / CCUG 10774 / NCTC 10582 / VPI-5482 / E50</strain>
    </source>
</reference>
<reference evidence="7" key="5">
    <citation type="submission" date="2010-09" db="PDB data bank">
        <title>Crystal structure of a putative glycosyl hydrolase (BT2157) from BACTEROIDES THETAIOTAOMICRON VPI-5482 at 1.80 A resolution.</title>
        <authorList>
            <consortium name="Joint Center for Structural Genomics (JCSG)"/>
        </authorList>
    </citation>
    <scope>X-RAY CRYSTALLOGRAPHY (1.80 ANGSTROMS) OF 27-290</scope>
</reference>
<sequence>MKKVFYPLACCLAAGVLVSCSGQKKAGSAQEEQSANEVAVSYSKSLKAAEMDSLQLPVDADGYITIFDGKTFNGWRGYGKDRVPSKWTIEDGCIKFNGSGGGEAQDGDGGDLIFAHKFKNFELEMEWKVSKGGNSGIFYLAQEVTSKDKDGNDVLEPIYISAPEYQVLDNDNHPDAKLGKDNNRQSASLYDMIPAVPQNAKPFGEWNKAKIMVYKGTVVHGQNDENVLEYHLWTKQWTDLLQASKFSQDKWPLAFELLNNCGGENHEGFIGMQDHGDDVWFRNIRVKVLD</sequence>
<organism>
    <name type="scientific">Bacteroides thetaiotaomicron (strain ATCC 29148 / DSM 2079 / JCM 5827 / CCUG 10774 / NCTC 10582 / VPI-5482 / E50)</name>
    <dbReference type="NCBI Taxonomy" id="226186"/>
    <lineage>
        <taxon>Bacteria</taxon>
        <taxon>Pseudomonadati</taxon>
        <taxon>Bacteroidota</taxon>
        <taxon>Bacteroidia</taxon>
        <taxon>Bacteroidales</taxon>
        <taxon>Bacteroidaceae</taxon>
        <taxon>Bacteroides</taxon>
    </lineage>
</organism>
<evidence type="ECO:0000255" key="1">
    <source>
        <dbReference type="PROSITE-ProRule" id="PRU00303"/>
    </source>
</evidence>
<evidence type="ECO:0000269" key="2">
    <source>
    </source>
</evidence>
<evidence type="ECO:0000269" key="3">
    <source>
    </source>
</evidence>
<evidence type="ECO:0000303" key="4">
    <source>
    </source>
</evidence>
<evidence type="ECO:0000305" key="5"/>
<evidence type="ECO:0000312" key="6">
    <source>
        <dbReference type="EMBL" id="AAO77264.1"/>
    </source>
</evidence>
<evidence type="ECO:0007744" key="7">
    <source>
        <dbReference type="PDB" id="3OSD"/>
    </source>
</evidence>
<evidence type="ECO:0007829" key="8">
    <source>
        <dbReference type="PDB" id="3OSD"/>
    </source>
</evidence>
<evidence type="ECO:0007829" key="9">
    <source>
        <dbReference type="PDB" id="8TDA"/>
    </source>
</evidence>
<gene>
    <name evidence="6" type="ordered locus">BT_2157</name>
</gene>
<accession>Q8A5T1</accession>
<feature type="signal peptide" evidence="1">
    <location>
        <begin position="1"/>
        <end position="19"/>
    </location>
</feature>
<feature type="chain" id="PRO_5004303110" description="3-keto-disaccharide hydrolase" evidence="1">
    <location>
        <begin position="20"/>
        <end position="290"/>
    </location>
</feature>
<feature type="lipid moiety-binding region" description="N-palmitoyl cysteine" evidence="1">
    <location>
        <position position="20"/>
    </location>
</feature>
<feature type="lipid moiety-binding region" description="S-diacylglycerol cysteine" evidence="1">
    <location>
        <position position="20"/>
    </location>
</feature>
<feature type="helix" evidence="8">
    <location>
        <begin position="29"/>
        <end position="35"/>
    </location>
</feature>
<feature type="strand" evidence="9">
    <location>
        <begin position="37"/>
        <end position="42"/>
    </location>
</feature>
<feature type="strand" evidence="9">
    <location>
        <begin position="52"/>
        <end position="58"/>
    </location>
</feature>
<feature type="strand" evidence="9">
    <location>
        <begin position="63"/>
        <end position="65"/>
    </location>
</feature>
<feature type="strand" evidence="9">
    <location>
        <begin position="75"/>
        <end position="77"/>
    </location>
</feature>
<feature type="strand" evidence="9">
    <location>
        <begin position="87"/>
        <end position="90"/>
    </location>
</feature>
<feature type="strand" evidence="9">
    <location>
        <begin position="93"/>
        <end position="96"/>
    </location>
</feature>
<feature type="helix" evidence="9">
    <location>
        <begin position="102"/>
        <end position="104"/>
    </location>
</feature>
<feature type="strand" evidence="9">
    <location>
        <begin position="112"/>
        <end position="129"/>
    </location>
</feature>
<feature type="strand" evidence="9">
    <location>
        <begin position="134"/>
        <end position="141"/>
    </location>
</feature>
<feature type="strand" evidence="9">
    <location>
        <begin position="145"/>
        <end position="147"/>
    </location>
</feature>
<feature type="strand" evidence="9">
    <location>
        <begin position="153"/>
        <end position="155"/>
    </location>
</feature>
<feature type="helix" evidence="9">
    <location>
        <begin position="158"/>
        <end position="160"/>
    </location>
</feature>
<feature type="strand" evidence="9">
    <location>
        <begin position="164"/>
        <end position="168"/>
    </location>
</feature>
<feature type="turn" evidence="9">
    <location>
        <begin position="170"/>
        <end position="172"/>
    </location>
</feature>
<feature type="helix" evidence="9">
    <location>
        <begin position="174"/>
        <end position="177"/>
    </location>
</feature>
<feature type="strand" evidence="9">
    <location>
        <begin position="178"/>
        <end position="180"/>
    </location>
</feature>
<feature type="turn" evidence="9">
    <location>
        <begin position="181"/>
        <end position="184"/>
    </location>
</feature>
<feature type="turn" evidence="9">
    <location>
        <begin position="190"/>
        <end position="192"/>
    </location>
</feature>
<feature type="strand" evidence="9">
    <location>
        <begin position="207"/>
        <end position="214"/>
    </location>
</feature>
<feature type="strand" evidence="9">
    <location>
        <begin position="217"/>
        <end position="222"/>
    </location>
</feature>
<feature type="strand" evidence="9">
    <location>
        <begin position="225"/>
        <end position="231"/>
    </location>
</feature>
<feature type="helix" evidence="9">
    <location>
        <begin position="235"/>
        <end position="242"/>
    </location>
</feature>
<feature type="turn" evidence="9">
    <location>
        <begin position="248"/>
        <end position="250"/>
    </location>
</feature>
<feature type="helix" evidence="9">
    <location>
        <begin position="252"/>
        <end position="259"/>
    </location>
</feature>
<feature type="turn" evidence="9">
    <location>
        <begin position="260"/>
        <end position="262"/>
    </location>
</feature>
<feature type="helix" evidence="9">
    <location>
        <begin position="263"/>
        <end position="265"/>
    </location>
</feature>
<feature type="strand" evidence="9">
    <location>
        <begin position="268"/>
        <end position="272"/>
    </location>
</feature>
<feature type="strand" evidence="9">
    <location>
        <begin position="275"/>
        <end position="277"/>
    </location>
</feature>
<feature type="strand" evidence="9">
    <location>
        <begin position="279"/>
        <end position="288"/>
    </location>
</feature>
<name>KDSAH_BACTN</name>
<proteinExistence type="evidence at protein level"/>
<keyword id="KW-0002">3D-structure</keyword>
<keyword id="KW-0119">Carbohydrate metabolism</keyword>
<keyword id="KW-1003">Cell membrane</keyword>
<keyword id="KW-0326">Glycosidase</keyword>
<keyword id="KW-0378">Hydrolase</keyword>
<keyword id="KW-0449">Lipoprotein</keyword>
<keyword id="KW-0472">Membrane</keyword>
<keyword id="KW-0564">Palmitate</keyword>
<keyword id="KW-1185">Reference proteome</keyword>
<keyword id="KW-0732">Signal</keyword>
<protein>
    <recommendedName>
        <fullName evidence="4">3-keto-disaccharide hydrolase</fullName>
        <ecNumber evidence="3">3.2.1.218</ecNumber>
    </recommendedName>
    <alternativeName>
        <fullName evidence="4">3-keto-glucoside hydrolase</fullName>
    </alternativeName>
    <alternativeName>
        <fullName evidence="5">3-keto-trehalose hydrolase</fullName>
    </alternativeName>
    <alternativeName>
        <fullName evidence="5">Alpha-3'-ketoglucosidase</fullName>
    </alternativeName>
</protein>